<sequence length="999" mass="110828">MKGLSGSRSHHHVVTCDPSFESMGHHLDHKPYLISQIDNPHPVDHSYYSQRSPYQPDCVVPYGTFPRRHYSSQHELKDEMAVVPYSGGGVPASKGQQRLPVALLDQFDRQLPVPRDGYHTLQYKRAAAALEQRSDSPGRIRHLVHSVQKLFTKSHSLEGPHHGHGHGKGSINGGKASPDGEPPAIRHRKRSKSRERCKSAEPKNRTPPSGYWSSDELEREACLFHHGPPGVMTMGRHPDKSQSQYFLEAYNTINDQALKNSRSNNDLGKCSTCTSIPLSVDASQLVKKSSWSSSLTVSRARQVYQKASVNVDKALVKAEACQQERSCQFLQLWKCVFVELSVCLDADMHVWAKVCDVASLLNRQVPQDEWGGFPLGKDEDIPCRRMRSGSYVKAMAEDDSGDSDGSPKPSPKMQARRASYLKATQPSLTEMTTLKISQEHSPKLQIRSHSYLRAVSEVSINRSLDTLDPKALLASPQYRSRNESYMRAMSTISQIEAMCESVFNEMESHAVDALDLPMPGCFRMRSHSYVRAIDQGCSQDDDSPLLPASPPRTTTTVRTIQSSTVSSCITTYKKTPPPVPPRTSTKPFISITAQSSTESAQDAYMDGPGTRGEPVLHSGLSNSTESIDSMKALTAAIEAANAQIHGPASQHVSNSTMTISTAPPSPLPLPVPVPVPIPIPALEDVRRDVLRKSRCLSIGIQSKFQSVGVQVEEEHGVTTAVQADLDTPDYTPADSPVTDFPAAGCLSRQYSRDAATSTVSIQGSGNHYHACTSDDYEDVGFDPSILPPPDPWIDSVIEDSLEVVGRSVCQRDGRWFLKLLQAETERMEGWCRQMEHDEKENKMPDEVLGKIRGAVGSAQLLMSQKFQQFRELCEENLNPNAHPRPVAQDLAGFWDMLQLSIENISLKFDELHQLKANNWRPLDPPERKERRLPPPVPKKPPKAHPPLARDRSLESTEKQRQEARKRLMAAKRAASVRQNSATESADSIEIYIPEAQTRL</sequence>
<reference key="1">
    <citation type="journal article" date="2013" name="Nature">
        <title>The zebrafish reference genome sequence and its relationship to the human genome.</title>
        <authorList>
            <person name="Howe K."/>
            <person name="Clark M.D."/>
            <person name="Torroja C.F."/>
            <person name="Torrance J."/>
            <person name="Berthelot C."/>
            <person name="Muffato M."/>
            <person name="Collins J.E."/>
            <person name="Humphray S."/>
            <person name="McLaren K."/>
            <person name="Matthews L."/>
            <person name="McLaren S."/>
            <person name="Sealy I."/>
            <person name="Caccamo M."/>
            <person name="Churcher C."/>
            <person name="Scott C."/>
            <person name="Barrett J.C."/>
            <person name="Koch R."/>
            <person name="Rauch G.J."/>
            <person name="White S."/>
            <person name="Chow W."/>
            <person name="Kilian B."/>
            <person name="Quintais L.T."/>
            <person name="Guerra-Assuncao J.A."/>
            <person name="Zhou Y."/>
            <person name="Gu Y."/>
            <person name="Yen J."/>
            <person name="Vogel J.H."/>
            <person name="Eyre T."/>
            <person name="Redmond S."/>
            <person name="Banerjee R."/>
            <person name="Chi J."/>
            <person name="Fu B."/>
            <person name="Langley E."/>
            <person name="Maguire S.F."/>
            <person name="Laird G.K."/>
            <person name="Lloyd D."/>
            <person name="Kenyon E."/>
            <person name="Donaldson S."/>
            <person name="Sehra H."/>
            <person name="Almeida-King J."/>
            <person name="Loveland J."/>
            <person name="Trevanion S."/>
            <person name="Jones M."/>
            <person name="Quail M."/>
            <person name="Willey D."/>
            <person name="Hunt A."/>
            <person name="Burton J."/>
            <person name="Sims S."/>
            <person name="McLay K."/>
            <person name="Plumb B."/>
            <person name="Davis J."/>
            <person name="Clee C."/>
            <person name="Oliver K."/>
            <person name="Clark R."/>
            <person name="Riddle C."/>
            <person name="Elliot D."/>
            <person name="Threadgold G."/>
            <person name="Harden G."/>
            <person name="Ware D."/>
            <person name="Begum S."/>
            <person name="Mortimore B."/>
            <person name="Kerry G."/>
            <person name="Heath P."/>
            <person name="Phillimore B."/>
            <person name="Tracey A."/>
            <person name="Corby N."/>
            <person name="Dunn M."/>
            <person name="Johnson C."/>
            <person name="Wood J."/>
            <person name="Clark S."/>
            <person name="Pelan S."/>
            <person name="Griffiths G."/>
            <person name="Smith M."/>
            <person name="Glithero R."/>
            <person name="Howden P."/>
            <person name="Barker N."/>
            <person name="Lloyd C."/>
            <person name="Stevens C."/>
            <person name="Harley J."/>
            <person name="Holt K."/>
            <person name="Panagiotidis G."/>
            <person name="Lovell J."/>
            <person name="Beasley H."/>
            <person name="Henderson C."/>
            <person name="Gordon D."/>
            <person name="Auger K."/>
            <person name="Wright D."/>
            <person name="Collins J."/>
            <person name="Raisen C."/>
            <person name="Dyer L."/>
            <person name="Leung K."/>
            <person name="Robertson L."/>
            <person name="Ambridge K."/>
            <person name="Leongamornlert D."/>
            <person name="McGuire S."/>
            <person name="Gilderthorp R."/>
            <person name="Griffiths C."/>
            <person name="Manthravadi D."/>
            <person name="Nichol S."/>
            <person name="Barker G."/>
            <person name="Whitehead S."/>
            <person name="Kay M."/>
            <person name="Brown J."/>
            <person name="Murnane C."/>
            <person name="Gray E."/>
            <person name="Humphries M."/>
            <person name="Sycamore N."/>
            <person name="Barker D."/>
            <person name="Saunders D."/>
            <person name="Wallis J."/>
            <person name="Babbage A."/>
            <person name="Hammond S."/>
            <person name="Mashreghi-Mohammadi M."/>
            <person name="Barr L."/>
            <person name="Martin S."/>
            <person name="Wray P."/>
            <person name="Ellington A."/>
            <person name="Matthews N."/>
            <person name="Ellwood M."/>
            <person name="Woodmansey R."/>
            <person name="Clark G."/>
            <person name="Cooper J."/>
            <person name="Tromans A."/>
            <person name="Grafham D."/>
            <person name="Skuce C."/>
            <person name="Pandian R."/>
            <person name="Andrews R."/>
            <person name="Harrison E."/>
            <person name="Kimberley A."/>
            <person name="Garnett J."/>
            <person name="Fosker N."/>
            <person name="Hall R."/>
            <person name="Garner P."/>
            <person name="Kelly D."/>
            <person name="Bird C."/>
            <person name="Palmer S."/>
            <person name="Gehring I."/>
            <person name="Berger A."/>
            <person name="Dooley C.M."/>
            <person name="Ersan-Urun Z."/>
            <person name="Eser C."/>
            <person name="Geiger H."/>
            <person name="Geisler M."/>
            <person name="Karotki L."/>
            <person name="Kirn A."/>
            <person name="Konantz J."/>
            <person name="Konantz M."/>
            <person name="Oberlander M."/>
            <person name="Rudolph-Geiger S."/>
            <person name="Teucke M."/>
            <person name="Lanz C."/>
            <person name="Raddatz G."/>
            <person name="Osoegawa K."/>
            <person name="Zhu B."/>
            <person name="Rapp A."/>
            <person name="Widaa S."/>
            <person name="Langford C."/>
            <person name="Yang F."/>
            <person name="Schuster S.C."/>
            <person name="Carter N.P."/>
            <person name="Harrow J."/>
            <person name="Ning Z."/>
            <person name="Herrero J."/>
            <person name="Searle S.M."/>
            <person name="Enright A."/>
            <person name="Geisler R."/>
            <person name="Plasterk R.H."/>
            <person name="Lee C."/>
            <person name="Westerfield M."/>
            <person name="de Jong P.J."/>
            <person name="Zon L.I."/>
            <person name="Postlethwait J.H."/>
            <person name="Nusslein-Volhard C."/>
            <person name="Hubbard T.J."/>
            <person name="Roest Crollius H."/>
            <person name="Rogers J."/>
            <person name="Stemple D.L."/>
        </authorList>
    </citation>
    <scope>NUCLEOTIDE SEQUENCE [LARGE SCALE GENOMIC DNA]</scope>
    <source>
        <strain>Tuebingen</strain>
    </source>
</reference>
<comment type="function">
    <text evidence="2">Part of the postsynaptic scaffold in neuronal cells.</text>
</comment>
<comment type="subcellular location">
    <subcellularLocation>
        <location evidence="1">Cell membrane</location>
        <topology evidence="1">Peripheral membrane protein</topology>
    </subcellularLocation>
    <subcellularLocation>
        <location evidence="1">Postsynaptic density</location>
    </subcellularLocation>
    <subcellularLocation>
        <location evidence="1">Synapse</location>
    </subcellularLocation>
    <text evidence="1">Found in postsynaptic density of neuronal cells.</text>
</comment>
<comment type="similarity">
    <text evidence="3">Belongs to the SAPAP family.</text>
</comment>
<accession>Q7ZYZ6</accession>
<gene>
    <name evidence="5" type="primary">dlgap1</name>
    <name type="ORF">si:zc142h2.3</name>
</gene>
<name>DLGP1_DANRE</name>
<feature type="chain" id="PRO_0000248260" description="Disks large-associated protein 1">
    <location>
        <begin position="1"/>
        <end position="999"/>
    </location>
</feature>
<feature type="region of interest" description="Disordered" evidence="4">
    <location>
        <begin position="155"/>
        <end position="213"/>
    </location>
</feature>
<feature type="region of interest" description="Disordered" evidence="4">
    <location>
        <begin position="395"/>
        <end position="418"/>
    </location>
</feature>
<feature type="region of interest" description="Disordered" evidence="4">
    <location>
        <begin position="918"/>
        <end position="989"/>
    </location>
</feature>
<feature type="short sequence motif" description="PDZ-binding" evidence="2">
    <location>
        <begin position="997"/>
        <end position="999"/>
    </location>
</feature>
<feature type="compositionally biased region" description="Basic and acidic residues" evidence="4">
    <location>
        <begin position="194"/>
        <end position="204"/>
    </location>
</feature>
<feature type="compositionally biased region" description="Basic and acidic residues" evidence="4">
    <location>
        <begin position="923"/>
        <end position="932"/>
    </location>
</feature>
<feature type="compositionally biased region" description="Basic and acidic residues" evidence="4">
    <location>
        <begin position="947"/>
        <end position="965"/>
    </location>
</feature>
<feature type="compositionally biased region" description="Polar residues" evidence="4">
    <location>
        <begin position="976"/>
        <end position="985"/>
    </location>
</feature>
<organism>
    <name type="scientific">Danio rerio</name>
    <name type="common">Zebrafish</name>
    <name type="synonym">Brachydanio rerio</name>
    <dbReference type="NCBI Taxonomy" id="7955"/>
    <lineage>
        <taxon>Eukaryota</taxon>
        <taxon>Metazoa</taxon>
        <taxon>Chordata</taxon>
        <taxon>Craniata</taxon>
        <taxon>Vertebrata</taxon>
        <taxon>Euteleostomi</taxon>
        <taxon>Actinopterygii</taxon>
        <taxon>Neopterygii</taxon>
        <taxon>Teleostei</taxon>
        <taxon>Ostariophysi</taxon>
        <taxon>Cypriniformes</taxon>
        <taxon>Danionidae</taxon>
        <taxon>Danioninae</taxon>
        <taxon>Danio</taxon>
    </lineage>
</organism>
<dbReference type="EMBL" id="AL845362">
    <property type="protein sequence ID" value="CAD60846.1"/>
    <property type="molecule type" value="Genomic_DNA"/>
</dbReference>
<dbReference type="RefSeq" id="NP_001189384.1">
    <property type="nucleotide sequence ID" value="NM_001202455.1"/>
</dbReference>
<dbReference type="SMR" id="Q7ZYZ6"/>
<dbReference type="FunCoup" id="Q7ZYZ6">
    <property type="interactions" value="1109"/>
</dbReference>
<dbReference type="STRING" id="7955.ENSDARP00000113100"/>
<dbReference type="PaxDb" id="7955-ENSDARP00000113100"/>
<dbReference type="GeneID" id="569898"/>
<dbReference type="KEGG" id="dre:569898"/>
<dbReference type="AGR" id="ZFIN:ZDB-GENE-030616-580"/>
<dbReference type="CTD" id="569898"/>
<dbReference type="ZFIN" id="ZDB-GENE-030616-580">
    <property type="gene designation" value="dlgap1a"/>
</dbReference>
<dbReference type="eggNOG" id="KOG3971">
    <property type="taxonomic scope" value="Eukaryota"/>
</dbReference>
<dbReference type="InParanoid" id="Q7ZYZ6"/>
<dbReference type="OrthoDB" id="10036956at2759"/>
<dbReference type="PhylomeDB" id="Q7ZYZ6"/>
<dbReference type="TreeFam" id="TF321382"/>
<dbReference type="PRO" id="PR:Q7ZYZ6"/>
<dbReference type="Proteomes" id="UP000000437">
    <property type="component" value="Chromosome 2"/>
</dbReference>
<dbReference type="GO" id="GO:0098978">
    <property type="term" value="C:glutamatergic synapse"/>
    <property type="evidence" value="ECO:0000318"/>
    <property type="project" value="GO_Central"/>
</dbReference>
<dbReference type="GO" id="GO:0005886">
    <property type="term" value="C:plasma membrane"/>
    <property type="evidence" value="ECO:0007669"/>
    <property type="project" value="UniProtKB-SubCell"/>
</dbReference>
<dbReference type="GO" id="GO:0014069">
    <property type="term" value="C:postsynaptic density"/>
    <property type="evidence" value="ECO:0007669"/>
    <property type="project" value="UniProtKB-SubCell"/>
</dbReference>
<dbReference type="GO" id="GO:0099572">
    <property type="term" value="C:postsynaptic specialization"/>
    <property type="evidence" value="ECO:0000318"/>
    <property type="project" value="GO_Central"/>
</dbReference>
<dbReference type="GO" id="GO:0060090">
    <property type="term" value="F:molecular adaptor activity"/>
    <property type="evidence" value="ECO:0000318"/>
    <property type="project" value="GO_Central"/>
</dbReference>
<dbReference type="GO" id="GO:0050804">
    <property type="term" value="P:modulation of chemical synaptic transmission"/>
    <property type="evidence" value="ECO:0000318"/>
    <property type="project" value="GO_Central"/>
</dbReference>
<dbReference type="GO" id="GO:0023052">
    <property type="term" value="P:signaling"/>
    <property type="evidence" value="ECO:0007669"/>
    <property type="project" value="InterPro"/>
</dbReference>
<dbReference type="InterPro" id="IPR005026">
    <property type="entry name" value="SAPAP"/>
</dbReference>
<dbReference type="PANTHER" id="PTHR12353:SF7">
    <property type="entry name" value="DISKS LARGE-ASSOCIATED PROTEIN 1"/>
    <property type="match status" value="1"/>
</dbReference>
<dbReference type="PANTHER" id="PTHR12353">
    <property type="entry name" value="DISKS LARGE-ASSOCIATED PROTEIN DAP SAP90/PSD-95-ASSOCIATED PROTEIN"/>
    <property type="match status" value="1"/>
</dbReference>
<dbReference type="Pfam" id="PF03359">
    <property type="entry name" value="GKAP"/>
    <property type="match status" value="1"/>
</dbReference>
<evidence type="ECO:0000250" key="1"/>
<evidence type="ECO:0000250" key="2">
    <source>
        <dbReference type="UniProtKB" id="P97836"/>
    </source>
</evidence>
<evidence type="ECO:0000255" key="3"/>
<evidence type="ECO:0000256" key="4">
    <source>
        <dbReference type="SAM" id="MobiDB-lite"/>
    </source>
</evidence>
<evidence type="ECO:0000312" key="5">
    <source>
        <dbReference type="ZFIN" id="ZDB-GENE-030616-580"/>
    </source>
</evidence>
<proteinExistence type="inferred from homology"/>
<keyword id="KW-1003">Cell membrane</keyword>
<keyword id="KW-0472">Membrane</keyword>
<keyword id="KW-1185">Reference proteome</keyword>
<keyword id="KW-0770">Synapse</keyword>
<protein>
    <recommendedName>
        <fullName>Disks large-associated protein 1</fullName>
        <shortName>DAP-1</shortName>
    </recommendedName>
    <alternativeName>
        <fullName>Guanylate kinase-associated protein</fullName>
    </alternativeName>
</protein>